<gene>
    <name evidence="1" type="primary">psb28</name>
    <name type="ordered locus">tlr0493</name>
</gene>
<dbReference type="EMBL" id="BA000039">
    <property type="protein sequence ID" value="BAC08045.1"/>
    <property type="molecule type" value="Genomic_DNA"/>
</dbReference>
<dbReference type="RefSeq" id="NP_681283.1">
    <property type="nucleotide sequence ID" value="NC_004113.1"/>
</dbReference>
<dbReference type="PDB" id="3ZPN">
    <property type="method" value="X-ray"/>
    <property type="resolution" value="2.36 A"/>
    <property type="chains" value="A/B/C/D=2-116"/>
</dbReference>
<dbReference type="PDB" id="7DXA">
    <property type="method" value="EM"/>
    <property type="resolution" value="3.14 A"/>
    <property type="chains" value="A=1-116"/>
</dbReference>
<dbReference type="PDB" id="7DXH">
    <property type="method" value="EM"/>
    <property type="resolution" value="3.14 A"/>
    <property type="chains" value="A=1-116"/>
</dbReference>
<dbReference type="PDB" id="7NHP">
    <property type="method" value="EM"/>
    <property type="resolution" value="2.72 A"/>
    <property type="chains" value="2=1-116"/>
</dbReference>
<dbReference type="PDB" id="7NHQ">
    <property type="method" value="EM"/>
    <property type="resolution" value="2.68 A"/>
    <property type="chains" value="2=1-116"/>
</dbReference>
<dbReference type="PDBsum" id="3ZPN"/>
<dbReference type="PDBsum" id="7DXA"/>
<dbReference type="PDBsum" id="7DXH"/>
<dbReference type="PDBsum" id="7NHP"/>
<dbReference type="PDBsum" id="7NHQ"/>
<dbReference type="EMDB" id="EMD-12336"/>
<dbReference type="EMDB" id="EMD-12337"/>
<dbReference type="EMDB" id="EMD-30902"/>
<dbReference type="EMDB" id="EMD-30909"/>
<dbReference type="SMR" id="Q8DLJ8"/>
<dbReference type="STRING" id="197221.gene:10747082"/>
<dbReference type="EnsemblBacteria" id="BAC08045">
    <property type="protein sequence ID" value="BAC08045"/>
    <property type="gene ID" value="BAC08045"/>
</dbReference>
<dbReference type="KEGG" id="tel:tlr0493"/>
<dbReference type="PATRIC" id="fig|197221.4.peg.518"/>
<dbReference type="eggNOG" id="ENOG5031GDS">
    <property type="taxonomic scope" value="Bacteria"/>
</dbReference>
<dbReference type="EvolutionaryTrace" id="Q8DLJ8"/>
<dbReference type="Proteomes" id="UP000000440">
    <property type="component" value="Chromosome"/>
</dbReference>
<dbReference type="GO" id="GO:0009654">
    <property type="term" value="C:photosystem II oxygen evolving complex"/>
    <property type="evidence" value="ECO:0007669"/>
    <property type="project" value="InterPro"/>
</dbReference>
<dbReference type="GO" id="GO:0031676">
    <property type="term" value="C:plasma membrane-derived thylakoid membrane"/>
    <property type="evidence" value="ECO:0007669"/>
    <property type="project" value="UniProtKB-SubCell"/>
</dbReference>
<dbReference type="GO" id="GO:0015979">
    <property type="term" value="P:photosynthesis"/>
    <property type="evidence" value="ECO:0007669"/>
    <property type="project" value="UniProtKB-UniRule"/>
</dbReference>
<dbReference type="Gene3D" id="2.40.30.220">
    <property type="entry name" value="Photosystem II Psb28"/>
    <property type="match status" value="1"/>
</dbReference>
<dbReference type="HAMAP" id="MF_01370">
    <property type="entry name" value="PSII_Psb28"/>
    <property type="match status" value="1"/>
</dbReference>
<dbReference type="InterPro" id="IPR038676">
    <property type="entry name" value="Psb28_c1_sf"/>
</dbReference>
<dbReference type="InterPro" id="IPR005610">
    <property type="entry name" value="PSII_Psb28_class-1"/>
</dbReference>
<dbReference type="NCBIfam" id="TIGR03047">
    <property type="entry name" value="PS_II_psb28"/>
    <property type="match status" value="1"/>
</dbReference>
<dbReference type="PANTHER" id="PTHR34963">
    <property type="match status" value="1"/>
</dbReference>
<dbReference type="PANTHER" id="PTHR34963:SF2">
    <property type="entry name" value="PHOTOSYSTEM II REACTION CENTER PSB28 PROTEIN, CHLOROPLASTIC"/>
    <property type="match status" value="1"/>
</dbReference>
<dbReference type="Pfam" id="PF03912">
    <property type="entry name" value="Psb28"/>
    <property type="match status" value="1"/>
</dbReference>
<reference key="1">
    <citation type="journal article" date="2002" name="DNA Res.">
        <title>Complete genome structure of the thermophilic cyanobacterium Thermosynechococcus elongatus BP-1.</title>
        <authorList>
            <person name="Nakamura Y."/>
            <person name="Kaneko T."/>
            <person name="Sato S."/>
            <person name="Ikeuchi M."/>
            <person name="Katoh H."/>
            <person name="Sasamoto S."/>
            <person name="Watanabe A."/>
            <person name="Iriguchi M."/>
            <person name="Kawashima K."/>
            <person name="Kimura T."/>
            <person name="Kishida Y."/>
            <person name="Kiyokawa C."/>
            <person name="Kohara M."/>
            <person name="Matsumoto M."/>
            <person name="Matsuno A."/>
            <person name="Nakazaki N."/>
            <person name="Shimpo S."/>
            <person name="Sugimoto M."/>
            <person name="Takeuchi C."/>
            <person name="Yamada M."/>
            <person name="Tabata S."/>
        </authorList>
    </citation>
    <scope>NUCLEOTIDE SEQUENCE [LARGE SCALE GENOMIC DNA]</scope>
    <source>
        <strain>NIES-2133 / IAM M-273 / BP-1</strain>
    </source>
</reference>
<reference evidence="3 4" key="2">
    <citation type="journal article" date="2021" name="Nat. Plants">
        <title>Structural insights into photosystem II assembly.</title>
        <authorList>
            <person name="Zabret J."/>
            <person name="Bohn S."/>
            <person name="Schuller S.K."/>
            <person name="Arnolds O."/>
            <person name="Moller M."/>
            <person name="Meier-Credo J."/>
            <person name="Liauw P."/>
            <person name="Chan A."/>
            <person name="Tajkhorshid E."/>
            <person name="Langer J.D."/>
            <person name="Stoll R."/>
            <person name="Krieger-Liszkay A."/>
            <person name="Engel B.D."/>
            <person name="Rudack T."/>
            <person name="Schuller J.M."/>
            <person name="Nowaczyk M.M."/>
        </authorList>
    </citation>
    <scope>STRUCTURE BY ELECTRON MICROSCOPY (2.68 ANGSTROMS) IN PSII-I ASSEMBLY COMPLEX</scope>
    <scope>FUNCTION</scope>
    <scope>SUBUNIT</scope>
    <scope>SUBCELLULAR LOCATION</scope>
    <scope>TOPOLOGY</scope>
    <source>
        <strain>NIES-2133 / IAM M-273 / BP-1</strain>
    </source>
</reference>
<evidence type="ECO:0000255" key="1">
    <source>
        <dbReference type="HAMAP-Rule" id="MF_01370"/>
    </source>
</evidence>
<evidence type="ECO:0000269" key="2">
    <source>
    </source>
</evidence>
<evidence type="ECO:0007744" key="3">
    <source>
        <dbReference type="PDB" id="7NHP"/>
    </source>
</evidence>
<evidence type="ECO:0007744" key="4">
    <source>
        <dbReference type="PDB" id="7NHQ"/>
    </source>
</evidence>
<evidence type="ECO:0007829" key="5">
    <source>
        <dbReference type="PDB" id="3ZPN"/>
    </source>
</evidence>
<evidence type="ECO:0007829" key="6">
    <source>
        <dbReference type="PDB" id="7NHQ"/>
    </source>
</evidence>
<feature type="chain" id="PRO_0000271567" description="Photosystem II assembly factor Psb28 protein">
    <location>
        <begin position="1"/>
        <end position="116"/>
    </location>
</feature>
<feature type="strand" evidence="5">
    <location>
        <begin position="6"/>
        <end position="10"/>
    </location>
</feature>
<feature type="strand" evidence="5">
    <location>
        <begin position="20"/>
        <end position="25"/>
    </location>
</feature>
<feature type="turn" evidence="6">
    <location>
        <begin position="27"/>
        <end position="30"/>
    </location>
</feature>
<feature type="strand" evidence="5">
    <location>
        <begin position="32"/>
        <end position="40"/>
    </location>
</feature>
<feature type="helix" evidence="5">
    <location>
        <begin position="42"/>
        <end position="46"/>
    </location>
</feature>
<feature type="strand" evidence="5">
    <location>
        <begin position="54"/>
        <end position="58"/>
    </location>
</feature>
<feature type="strand" evidence="5">
    <location>
        <begin position="61"/>
        <end position="65"/>
    </location>
</feature>
<feature type="strand" evidence="5">
    <location>
        <begin position="68"/>
        <end position="73"/>
    </location>
</feature>
<feature type="strand" evidence="5">
    <location>
        <begin position="76"/>
        <end position="86"/>
    </location>
</feature>
<feature type="helix" evidence="5">
    <location>
        <begin position="89"/>
        <end position="105"/>
    </location>
</feature>
<accession>Q8DLJ8</accession>
<name>PSB28_THEVB</name>
<sequence>MGAMAEIQFIRGINEEVVPDVRLTRARDGSSGQAMFYFDNPKIVQEGNLEVTGMYMVDEEGEIVTRDVNAKFINGQPVAIEATYTMRSPQEWDRFIRFMDRYAASHGLGFQKSENS</sequence>
<protein>
    <recommendedName>
        <fullName evidence="1">Photosystem II assembly factor Psb28 protein</fullName>
    </recommendedName>
    <alternativeName>
        <fullName evidence="1">Photosystem II 13 kDa protein</fullName>
    </alternativeName>
    <alternativeName>
        <fullName evidence="1">Photosystem II reaction center W protein</fullName>
    </alternativeName>
</protein>
<organism>
    <name type="scientific">Thermosynechococcus vestitus (strain NIES-2133 / IAM M-273 / BP-1)</name>
    <dbReference type="NCBI Taxonomy" id="197221"/>
    <lineage>
        <taxon>Bacteria</taxon>
        <taxon>Bacillati</taxon>
        <taxon>Cyanobacteriota</taxon>
        <taxon>Cyanophyceae</taxon>
        <taxon>Acaryochloridales</taxon>
        <taxon>Thermosynechococcaceae</taxon>
        <taxon>Thermosynechococcus</taxon>
    </lineage>
</organism>
<keyword id="KW-0002">3D-structure</keyword>
<keyword id="KW-0472">Membrane</keyword>
<keyword id="KW-0602">Photosynthesis</keyword>
<keyword id="KW-0604">Photosystem II</keyword>
<keyword id="KW-1185">Reference proteome</keyword>
<keyword id="KW-0793">Thylakoid</keyword>
<proteinExistence type="evidence at protein level"/>
<comment type="function">
    <text evidence="2">A photosystem II (PSII) assembly factor that binds PSII during biogenesis, protecting the complex until water splitting is activated.</text>
</comment>
<comment type="subunit">
    <text evidence="2">Part of a photosystem II (PSII) assembly intermediate complex PSII-I; crystallized from a strain deleted of psbJ, it forms monomeric PSII before addition of the oxygen evolving complex. PSII-I includes 3 assembly factors not found in mature PSII (Psb27, Psb28 and Psb34). This protein binds to the cytoplasmic face of D1 and D2 (psbA and psbD), contacting CP47 (psbB) directly above the quinone b-binding site.</text>
</comment>
<comment type="subcellular location">
    <subcellularLocation>
        <location evidence="1 2">Cellular thylakoid membrane</location>
        <topology evidence="1 2">Peripheral membrane protein</topology>
        <orientation evidence="1 2">Cytoplasmic side</orientation>
    </subcellularLocation>
</comment>
<comment type="similarity">
    <text evidence="1">Belongs to the Psb28 family.</text>
</comment>